<protein>
    <recommendedName>
        <fullName>Nucleoprotein</fullName>
        <shortName>Protein N</shortName>
    </recommendedName>
    <alternativeName>
        <fullName>Nucleocapsid protein</fullName>
    </alternativeName>
</protein>
<accession>P24566</accession>
<reference key="1">
    <citation type="journal article" date="1989" name="J. Gen. Virol.">
        <title>The 1B (NS2), 1C (NS1) and N proteins of human respiratory syncytial virus (RSV) of antigenic subgroups A and B: sequence conservation and divergence within RSV genomic RNA.</title>
        <authorList>
            <person name="Johnson P.R."/>
            <person name="Collins P.L."/>
        </authorList>
    </citation>
    <scope>NUCLEOTIDE SEQUENCE [GENOMIC RNA]</scope>
</reference>
<evidence type="ECO:0000250" key="1">
    <source>
        <dbReference type="UniProtKB" id="P03418"/>
    </source>
</evidence>
<evidence type="ECO:0000250" key="2">
    <source>
        <dbReference type="UniProtKB" id="P22677"/>
    </source>
</evidence>
<evidence type="ECO:0000305" key="3"/>
<organismHost>
    <name type="scientific">Homo sapiens</name>
    <name type="common">Human</name>
    <dbReference type="NCBI Taxonomy" id="9606"/>
</organismHost>
<keyword id="KW-0167">Capsid protein</keyword>
<keyword id="KW-1139">Helical capsid protein</keyword>
<keyword id="KW-1035">Host cytoplasm</keyword>
<keyword id="KW-0945">Host-virus interaction</keyword>
<keyword id="KW-1090">Inhibition of host innate immune response by virus</keyword>
<keyword id="KW-1114">Inhibition of host interferon signaling pathway by virus</keyword>
<keyword id="KW-1097">Inhibition of host MAVS by virus</keyword>
<keyword id="KW-1089">Inhibition of host MDA5 by virus</keyword>
<keyword id="KW-1100">Inhibition of host NF-kappa-B by virus</keyword>
<keyword id="KW-1102">Inhibition of host PKR by virus</keyword>
<keyword id="KW-1113">Inhibition of host RLR pathway by virus</keyword>
<keyword id="KW-0922">Interferon antiviral system evasion</keyword>
<keyword id="KW-0597">Phosphoprotein</keyword>
<keyword id="KW-0687">Ribonucleoprotein</keyword>
<keyword id="KW-0694">RNA-binding</keyword>
<keyword id="KW-0899">Viral immunoevasion</keyword>
<keyword id="KW-0543">Viral nucleoprotein</keyword>
<keyword id="KW-0946">Virion</keyword>
<dbReference type="EMBL" id="D00736">
    <property type="protein sequence ID" value="BAA00637.1"/>
    <property type="molecule type" value="Genomic_RNA"/>
</dbReference>
<dbReference type="PIR" id="C32063">
    <property type="entry name" value="VHNZ3"/>
</dbReference>
<dbReference type="SMR" id="P24566"/>
<dbReference type="GO" id="GO:0019029">
    <property type="term" value="C:helical viral capsid"/>
    <property type="evidence" value="ECO:0007669"/>
    <property type="project" value="UniProtKB-KW"/>
</dbReference>
<dbReference type="GO" id="GO:0030430">
    <property type="term" value="C:host cell cytoplasm"/>
    <property type="evidence" value="ECO:0007669"/>
    <property type="project" value="UniProtKB-SubCell"/>
</dbReference>
<dbReference type="GO" id="GO:1990904">
    <property type="term" value="C:ribonucleoprotein complex"/>
    <property type="evidence" value="ECO:0007669"/>
    <property type="project" value="UniProtKB-KW"/>
</dbReference>
<dbReference type="GO" id="GO:0019013">
    <property type="term" value="C:viral nucleocapsid"/>
    <property type="evidence" value="ECO:0007669"/>
    <property type="project" value="UniProtKB-KW"/>
</dbReference>
<dbReference type="GO" id="GO:0030291">
    <property type="term" value="F:protein serine/threonine kinase inhibitor activity"/>
    <property type="evidence" value="ECO:0007669"/>
    <property type="project" value="UniProtKB-KW"/>
</dbReference>
<dbReference type="GO" id="GO:0003723">
    <property type="term" value="F:RNA binding"/>
    <property type="evidence" value="ECO:0007669"/>
    <property type="project" value="UniProtKB-KW"/>
</dbReference>
<dbReference type="GO" id="GO:0039545">
    <property type="term" value="P:symbiont-mediated suppression of host cytoplasmic pattern recognition receptor signaling pathway via inhibition of MAVS activity"/>
    <property type="evidence" value="ECO:0007669"/>
    <property type="project" value="UniProtKB-KW"/>
</dbReference>
<dbReference type="GO" id="GO:0039554">
    <property type="term" value="P:symbiont-mediated suppression of host cytoplasmic pattern recognition receptor signaling pathway via inhibition of MDA-5 activity"/>
    <property type="evidence" value="ECO:0007669"/>
    <property type="project" value="UniProtKB-KW"/>
</dbReference>
<dbReference type="GO" id="GO:0085034">
    <property type="term" value="P:symbiont-mediated suppression of host NF-kappaB cascade"/>
    <property type="evidence" value="ECO:0007669"/>
    <property type="project" value="UniProtKB-KW"/>
</dbReference>
<dbReference type="GO" id="GO:0039580">
    <property type="term" value="P:symbiont-mediated suppression of host PKR/eIFalpha signaling"/>
    <property type="evidence" value="ECO:0007669"/>
    <property type="project" value="UniProtKB-KW"/>
</dbReference>
<dbReference type="GO" id="GO:0039502">
    <property type="term" value="P:symbiont-mediated suppression of host type I interferon-mediated signaling pathway"/>
    <property type="evidence" value="ECO:0007669"/>
    <property type="project" value="UniProtKB-KW"/>
</dbReference>
<dbReference type="InterPro" id="IPR004930">
    <property type="entry name" value="Pneumo_ncap"/>
</dbReference>
<dbReference type="Pfam" id="PF03246">
    <property type="entry name" value="Pneumo_ncap"/>
    <property type="match status" value="1"/>
</dbReference>
<comment type="function">
    <text evidence="1">Encapsidates the viral RNA genome by forming a left-handed helical nucleocapsid that protects the RNA from nucleases. RNA replication depends on the availability of soluble nucleoprotein. The encapsidated genomic RNA is termed the NC and serves as template for transcription and replication. Together with the phosphoprotein, sequesters host NF-kappa-B in inclusion bodies (IBs) thereby inhibiting this host defense pathway. May also act as a modulator of the innate immune response by sequestration of host IFIH1/MDA5 and MAVS into IBs.</text>
</comment>
<comment type="subunit">
    <text evidence="1 2">Homomultimerizes to form the nucleocapsid. Binds to viral genomic RNA. Interacts (via N-terminus) with the phosphoprotein P (via C-terminus); the phosphorylated phosphoprotein P binds to N-RNA complex. When in a monomeric RNA-free form, interacts with the phosphoprotein (via N-terminus). Interacts with protein M2-1; this interaction allows the association of nucleocapsid with the matrix protein. Interacts with host EIF2AK2/PKR; this interaction inhibits EIF2AK2 phosphorylation of EIF2S1 and blocks EIF2AK2-mediated translation shutoff. Interacts with host EIF1AX; this interaction recruits EIF1AX to the viral replication complex to facilitate viral genomic RNA synthesis and virus production (By similarity). Interacts with host NF-kappa-B; this interaction sequesters NF-kappa-B in inclusion bodies (By similarity). Interacts with host TAX1BP1; this interaction may promote viral growth by inhibiting the innate immune response (By similarity).</text>
</comment>
<comment type="subcellular location">
    <subcellularLocation>
        <location evidence="1">Virion</location>
    </subcellularLocation>
    <subcellularLocation>
        <location evidence="1">Host cytoplasm</location>
    </subcellularLocation>
    <text evidence="1">Localizes in cytoplasmic inclusion bodies.</text>
</comment>
<comment type="PTM">
    <text evidence="1">Tyrosine phosphorylation modulates viral transcription and replication.</text>
</comment>
<comment type="similarity">
    <text evidence="3">Belongs to the paramyxoviruses nucleocapsid family.</text>
</comment>
<feature type="chain" id="PRO_0000142651" description="Nucleoprotein">
    <location>
        <begin position="1"/>
        <end position="391"/>
    </location>
</feature>
<feature type="region of interest" description="Interaction with the phosphoprotein" evidence="1">
    <location>
        <begin position="31"/>
        <end position="252"/>
    </location>
</feature>
<feature type="region of interest" description="Interaction with the phosphoprotein" evidence="2">
    <location>
        <begin position="244"/>
        <end position="290"/>
    </location>
</feature>
<feature type="region of interest" description="Interaction with the phosphoprotein" evidence="2">
    <location>
        <begin position="338"/>
        <end position="364"/>
    </location>
</feature>
<feature type="modified residue" description="Phosphotyrosine" evidence="1">
    <location>
        <position position="38"/>
    </location>
</feature>
<sequence length="391" mass="43416">MALSKVKLNDTLNKDQLLSSSKYTIQRSTGDNIDTPNYDVQKHLNKLCGMLLITEDANHKFTGLIGMLYAMSRLGREDTIKILKDAGYHVKANGVDITTYRQDINGKEMKFEVLTLSSLTSEIQVNIEIESRKSYKKLLKEMGEVAPEYRHDSPDCGMIILCIAALVITKLAAGDRSGLTAVIRRANNVLKNEIKRYKGLIPKDIANSFYEVFEKHPHLIDVFVHFGIAQSSTRGGSRVEGIFAGLFMNAYGSGQVMLRWGVLAKSVKNIMLGHASVQAEMEQVVEVYEYAQKLGGEAGFYHILNNPKASLLSLTQFPNFSSVVLGNAAGLGIMGEYRGTPRNQDLYDAAKAYAEQLKENGVINYSVLDLTAEELEAIKHQLNPKEDDVEL</sequence>
<gene>
    <name type="primary">N</name>
</gene>
<organism>
    <name type="scientific">Human respiratory syncytial virus B (strain 18537)</name>
    <dbReference type="NCBI Taxonomy" id="11251"/>
    <lineage>
        <taxon>Viruses</taxon>
        <taxon>Riboviria</taxon>
        <taxon>Orthornavirae</taxon>
        <taxon>Negarnaviricota</taxon>
        <taxon>Haploviricotina</taxon>
        <taxon>Monjiviricetes</taxon>
        <taxon>Mononegavirales</taxon>
        <taxon>Pneumoviridae</taxon>
        <taxon>Orthopneumovirus</taxon>
        <taxon>Orthopneumovirus hominis</taxon>
    </lineage>
</organism>
<name>NCAP_HRSV1</name>
<proteinExistence type="inferred from homology"/>